<organism>
    <name type="scientific">Danio rerio</name>
    <name type="common">Zebrafish</name>
    <name type="synonym">Brachydanio rerio</name>
    <dbReference type="NCBI Taxonomy" id="7955"/>
    <lineage>
        <taxon>Eukaryota</taxon>
        <taxon>Metazoa</taxon>
        <taxon>Chordata</taxon>
        <taxon>Craniata</taxon>
        <taxon>Vertebrata</taxon>
        <taxon>Euteleostomi</taxon>
        <taxon>Actinopterygii</taxon>
        <taxon>Neopterygii</taxon>
        <taxon>Teleostei</taxon>
        <taxon>Ostariophysi</taxon>
        <taxon>Cypriniformes</taxon>
        <taxon>Danionidae</taxon>
        <taxon>Danioninae</taxon>
        <taxon>Danio</taxon>
    </lineage>
</organism>
<name>OXND1_DANRE</name>
<evidence type="ECO:0000250" key="1"/>
<evidence type="ECO:0000255" key="2">
    <source>
        <dbReference type="PROSITE-ProRule" id="PRU00716"/>
    </source>
</evidence>
<accession>A3KP77</accession>
<dbReference type="EC" id="1.-.-.-"/>
<dbReference type="EMBL" id="BC134194">
    <property type="protein sequence ID" value="AAI34195.1"/>
    <property type="molecule type" value="mRNA"/>
</dbReference>
<dbReference type="RefSeq" id="NP_001103926.1">
    <property type="nucleotide sequence ID" value="NM_001110456.1"/>
</dbReference>
<dbReference type="SMR" id="A3KP77"/>
<dbReference type="FunCoup" id="A3KP77">
    <property type="interactions" value="53"/>
</dbReference>
<dbReference type="STRING" id="7955.ENSDARP00000125618"/>
<dbReference type="PaxDb" id="7955-ENSDARP00000107722"/>
<dbReference type="GeneID" id="558500"/>
<dbReference type="KEGG" id="dre:558500"/>
<dbReference type="AGR" id="ZFIN:ZDB-GENE-060503-199"/>
<dbReference type="CTD" id="92106"/>
<dbReference type="ZFIN" id="ZDB-GENE-060503-199">
    <property type="gene designation" value="oxnad1"/>
</dbReference>
<dbReference type="eggNOG" id="KOG0534">
    <property type="taxonomic scope" value="Eukaryota"/>
</dbReference>
<dbReference type="InParanoid" id="A3KP77"/>
<dbReference type="OrthoDB" id="436496at2759"/>
<dbReference type="PhylomeDB" id="A3KP77"/>
<dbReference type="PRO" id="PR:A3KP77"/>
<dbReference type="Proteomes" id="UP000000437">
    <property type="component" value="Chromosome 19"/>
</dbReference>
<dbReference type="GO" id="GO:0016491">
    <property type="term" value="F:oxidoreductase activity"/>
    <property type="evidence" value="ECO:0007669"/>
    <property type="project" value="UniProtKB-KW"/>
</dbReference>
<dbReference type="CDD" id="cd00322">
    <property type="entry name" value="FNR_like"/>
    <property type="match status" value="1"/>
</dbReference>
<dbReference type="Gene3D" id="3.40.50.80">
    <property type="entry name" value="Nucleotide-binding domain of ferredoxin-NADP reductase (FNR) module"/>
    <property type="match status" value="1"/>
</dbReference>
<dbReference type="Gene3D" id="2.40.30.10">
    <property type="entry name" value="Translation factors"/>
    <property type="match status" value="1"/>
</dbReference>
<dbReference type="InterPro" id="IPR017927">
    <property type="entry name" value="FAD-bd_FR_type"/>
</dbReference>
<dbReference type="InterPro" id="IPR039261">
    <property type="entry name" value="FNR_nucleotide-bd"/>
</dbReference>
<dbReference type="InterPro" id="IPR052128">
    <property type="entry name" value="Oxidoreductase_NAD-binding"/>
</dbReference>
<dbReference type="InterPro" id="IPR001433">
    <property type="entry name" value="OxRdtase_FAD/NAD-bd"/>
</dbReference>
<dbReference type="InterPro" id="IPR017938">
    <property type="entry name" value="Riboflavin_synthase-like_b-brl"/>
</dbReference>
<dbReference type="PANTHER" id="PTHR46505">
    <property type="entry name" value="OXIDOREDUCTASE NAD-BINDING DOMAIN-CONTAINING PROTEIN 1"/>
    <property type="match status" value="1"/>
</dbReference>
<dbReference type="PANTHER" id="PTHR46505:SF1">
    <property type="entry name" value="OXIDOREDUCTASE NAD-BINDING DOMAIN-CONTAINING PROTEIN 1"/>
    <property type="match status" value="1"/>
</dbReference>
<dbReference type="Pfam" id="PF00175">
    <property type="entry name" value="NAD_binding_1"/>
    <property type="match status" value="1"/>
</dbReference>
<dbReference type="PRINTS" id="PR00410">
    <property type="entry name" value="PHEHYDRXLASE"/>
</dbReference>
<dbReference type="SUPFAM" id="SSF52343">
    <property type="entry name" value="Ferredoxin reductase-like, C-terminal NADP-linked domain"/>
    <property type="match status" value="1"/>
</dbReference>
<dbReference type="SUPFAM" id="SSF63380">
    <property type="entry name" value="Riboflavin synthase domain-like"/>
    <property type="match status" value="1"/>
</dbReference>
<dbReference type="PROSITE" id="PS51384">
    <property type="entry name" value="FAD_FR"/>
    <property type="match status" value="1"/>
</dbReference>
<gene>
    <name type="primary">oxnad1</name>
</gene>
<keyword id="KW-0520">NAD</keyword>
<keyword id="KW-0560">Oxidoreductase</keyword>
<keyword id="KW-1185">Reference proteome</keyword>
<sequence length="270" mass="30699">MTSRRRTDHLERTASVHRQMELFSARVCDIISESDTVKRLRLEVAHPDFSFRAGQWVDFFIPGVDTVGGFSICSSPGLLKREGAIELAVKYARHPPAHWIHTECSVDSQVAVRVGGNFYFDPQPSNPVVDLLLVAGGVGINPLYSILLHAADLHRHTHSHRYTPGHTHLCYSAKNTTELLFKDTIIDICHERPDKFSCHFHVTQQSSDIEPQLQPYTIRGRISAEELQRYVDPERTLCYLCGPPPMIEKVSSDLQSTGLPEDRILFEKWW</sequence>
<protein>
    <recommendedName>
        <fullName>Oxidoreductase NAD-binding domain-containing protein 1</fullName>
        <ecNumber>1.-.-.-</ecNumber>
    </recommendedName>
</protein>
<proteinExistence type="evidence at transcript level"/>
<feature type="chain" id="PRO_0000299574" description="Oxidoreductase NAD-binding domain-containing protein 1">
    <location>
        <begin position="1"/>
        <end position="270"/>
    </location>
</feature>
<feature type="domain" description="FAD-binding FR-type" evidence="2">
    <location>
        <begin position="20"/>
        <end position="123"/>
    </location>
</feature>
<feature type="binding site" evidence="1">
    <location>
        <begin position="137"/>
        <end position="142"/>
    </location>
    <ligand>
        <name>NAD(+)</name>
        <dbReference type="ChEBI" id="CHEBI:57540"/>
    </ligand>
</feature>
<reference key="1">
    <citation type="submission" date="2007-03" db="EMBL/GenBank/DDBJ databases">
        <authorList>
            <consortium name="NIH - Zebrafish Gene Collection (ZGC) project"/>
        </authorList>
    </citation>
    <scope>NUCLEOTIDE SEQUENCE [LARGE SCALE MRNA]</scope>
    <source>
        <tissue>Larval eye</tissue>
    </source>
</reference>